<proteinExistence type="evidence at protein level"/>
<organism>
    <name type="scientific">Arabidopsis thaliana</name>
    <name type="common">Mouse-ear cress</name>
    <dbReference type="NCBI Taxonomy" id="3702"/>
    <lineage>
        <taxon>Eukaryota</taxon>
        <taxon>Viridiplantae</taxon>
        <taxon>Streptophyta</taxon>
        <taxon>Embryophyta</taxon>
        <taxon>Tracheophyta</taxon>
        <taxon>Spermatophyta</taxon>
        <taxon>Magnoliopsida</taxon>
        <taxon>eudicotyledons</taxon>
        <taxon>Gunneridae</taxon>
        <taxon>Pentapetalae</taxon>
        <taxon>rosids</taxon>
        <taxon>malvids</taxon>
        <taxon>Brassicales</taxon>
        <taxon>Brassicaceae</taxon>
        <taxon>Camelineae</taxon>
        <taxon>Arabidopsis</taxon>
    </lineage>
</organism>
<evidence type="ECO:0000250" key="1">
    <source>
        <dbReference type="UniProtKB" id="P46988"/>
    </source>
</evidence>
<evidence type="ECO:0000250" key="2">
    <source>
        <dbReference type="UniProtKB" id="P57742"/>
    </source>
</evidence>
<evidence type="ECO:0000250" key="3">
    <source>
        <dbReference type="UniProtKB" id="Q2HIK4"/>
    </source>
</evidence>
<evidence type="ECO:0000255" key="4"/>
<evidence type="ECO:0000269" key="5">
    <source>
    </source>
</evidence>
<evidence type="ECO:0000269" key="6">
    <source>
    </source>
</evidence>
<evidence type="ECO:0000269" key="7">
    <source>
    </source>
</evidence>
<evidence type="ECO:0000303" key="8">
    <source>
    </source>
</evidence>
<evidence type="ECO:0000305" key="9"/>
<evidence type="ECO:0000312" key="10">
    <source>
        <dbReference type="Araport" id="AT2G07340"/>
    </source>
</evidence>
<evidence type="ECO:0000312" key="11">
    <source>
        <dbReference type="EMBL" id="AAD15526.1"/>
    </source>
</evidence>
<keyword id="KW-0143">Chaperone</keyword>
<keyword id="KW-0175">Coiled coil</keyword>
<keyword id="KW-0963">Cytoplasm</keyword>
<keyword id="KW-0539">Nucleus</keyword>
<keyword id="KW-1185">Reference proteome</keyword>
<name>PFD1_ARATH</name>
<gene>
    <name evidence="8" type="primary">PFD1</name>
    <name evidence="8" type="synonym">GIM6</name>
    <name evidence="10" type="ordered locus">At2g07340</name>
    <name evidence="11" type="ORF">T13E11.11</name>
</gene>
<sequence length="128" mass="14605">MADEATRAAFMEIQASMIELTGKLKQVQNQMRNKEGDRKRAFLTLEELRPLPEETNTYKSIGRTFVLEPKTVLEGEQEQKLKDSEAAVASLQTSKEYLEKQVAEVENNLRELLQQEPGIAQQIMSMSM</sequence>
<protein>
    <recommendedName>
        <fullName evidence="8">Prefoldin subunit 1</fullName>
    </recommendedName>
    <alternativeName>
        <fullName evidence="8">Gene involved in microtubule biogenesis 6</fullName>
    </alternativeName>
</protein>
<feature type="chain" id="PRO_0000455728" description="Prefoldin subunit 1">
    <location>
        <begin position="1"/>
        <end position="128"/>
    </location>
</feature>
<feature type="coiled-coil region" evidence="4">
    <location>
        <begin position="17"/>
        <end position="37"/>
    </location>
</feature>
<feature type="coiled-coil region" evidence="4">
    <location>
        <begin position="81"/>
        <end position="115"/>
    </location>
</feature>
<dbReference type="EMBL" id="AC006217">
    <property type="protein sequence ID" value="AAD15526.1"/>
    <property type="status" value="ALT_SEQ"/>
    <property type="molecule type" value="Genomic_DNA"/>
</dbReference>
<dbReference type="EMBL" id="AC006217">
    <property type="protein sequence ID" value="AAD15527.1"/>
    <property type="status" value="ALT_SEQ"/>
    <property type="molecule type" value="Genomic_DNA"/>
</dbReference>
<dbReference type="EMBL" id="CP002685">
    <property type="protein sequence ID" value="AEC06048.1"/>
    <property type="molecule type" value="Genomic_DNA"/>
</dbReference>
<dbReference type="EMBL" id="AY048212">
    <property type="protein sequence ID" value="AAK82475.1"/>
    <property type="molecule type" value="mRNA"/>
</dbReference>
<dbReference type="EMBL" id="AY094019">
    <property type="protein sequence ID" value="AAM16175.1"/>
    <property type="molecule type" value="mRNA"/>
</dbReference>
<dbReference type="EMBL" id="AY087310">
    <property type="protein sequence ID" value="AAM64861.1"/>
    <property type="molecule type" value="mRNA"/>
</dbReference>
<dbReference type="PIR" id="F84484">
    <property type="entry name" value="F84484"/>
</dbReference>
<dbReference type="PIR" id="G84484">
    <property type="entry name" value="G84484"/>
</dbReference>
<dbReference type="RefSeq" id="NP_850990.1">
    <property type="nucleotide sequence ID" value="NM_180659.3"/>
</dbReference>
<dbReference type="SMR" id="Q94AF7"/>
<dbReference type="FunCoup" id="Q94AF7">
    <property type="interactions" value="3597"/>
</dbReference>
<dbReference type="IntAct" id="Q94AF7">
    <property type="interactions" value="2"/>
</dbReference>
<dbReference type="STRING" id="3702.Q94AF7"/>
<dbReference type="PaxDb" id="3702-AT2G07340.1"/>
<dbReference type="ProteomicsDB" id="176753"/>
<dbReference type="EnsemblPlants" id="AT2G07340.1">
    <property type="protein sequence ID" value="AT2G07340.1"/>
    <property type="gene ID" value="AT2G07340"/>
</dbReference>
<dbReference type="GeneID" id="815304"/>
<dbReference type="Gramene" id="AT2G07340.1">
    <property type="protein sequence ID" value="AT2G07340.1"/>
    <property type="gene ID" value="AT2G07340"/>
</dbReference>
<dbReference type="KEGG" id="ath:AT2G07340"/>
<dbReference type="Araport" id="AT2G07340"/>
<dbReference type="TAIR" id="AT2G07340">
    <property type="gene designation" value="PFD1"/>
</dbReference>
<dbReference type="eggNOG" id="KOG3501">
    <property type="taxonomic scope" value="Eukaryota"/>
</dbReference>
<dbReference type="HOGENOM" id="CLU_122140_2_1_1"/>
<dbReference type="InParanoid" id="Q94AF7"/>
<dbReference type="OMA" id="REMIQQK"/>
<dbReference type="OrthoDB" id="5242628at2759"/>
<dbReference type="PRO" id="PR:Q94AF7"/>
<dbReference type="Proteomes" id="UP000006548">
    <property type="component" value="Chromosome 2"/>
</dbReference>
<dbReference type="ExpressionAtlas" id="Q94AF7">
    <property type="expression patterns" value="baseline and differential"/>
</dbReference>
<dbReference type="GO" id="GO:0005829">
    <property type="term" value="C:cytosol"/>
    <property type="evidence" value="ECO:0007005"/>
    <property type="project" value="TAIR"/>
</dbReference>
<dbReference type="GO" id="GO:0005739">
    <property type="term" value="C:mitochondrion"/>
    <property type="evidence" value="ECO:0007005"/>
    <property type="project" value="TAIR"/>
</dbReference>
<dbReference type="GO" id="GO:0005634">
    <property type="term" value="C:nucleus"/>
    <property type="evidence" value="ECO:0000250"/>
    <property type="project" value="UniProtKB"/>
</dbReference>
<dbReference type="GO" id="GO:0016272">
    <property type="term" value="C:prefoldin complex"/>
    <property type="evidence" value="ECO:0000250"/>
    <property type="project" value="UniProtKB"/>
</dbReference>
<dbReference type="GO" id="GO:0051082">
    <property type="term" value="F:unfolded protein binding"/>
    <property type="evidence" value="ECO:0007669"/>
    <property type="project" value="InterPro"/>
</dbReference>
<dbReference type="GO" id="GO:0071370">
    <property type="term" value="P:cellular response to gibberellin stimulus"/>
    <property type="evidence" value="ECO:0000250"/>
    <property type="project" value="UniProtKB"/>
</dbReference>
<dbReference type="GO" id="GO:0043622">
    <property type="term" value="P:cortical microtubule organization"/>
    <property type="evidence" value="ECO:0000250"/>
    <property type="project" value="UniProtKB"/>
</dbReference>
<dbReference type="GO" id="GO:0006397">
    <property type="term" value="P:mRNA processing"/>
    <property type="evidence" value="ECO:0000250"/>
    <property type="project" value="UniProtKB"/>
</dbReference>
<dbReference type="GO" id="GO:0006457">
    <property type="term" value="P:protein folding"/>
    <property type="evidence" value="ECO:0000315"/>
    <property type="project" value="UniProtKB"/>
</dbReference>
<dbReference type="GO" id="GO:0009409">
    <property type="term" value="P:response to cold"/>
    <property type="evidence" value="ECO:0000270"/>
    <property type="project" value="UniProtKB"/>
</dbReference>
<dbReference type="CDD" id="cd23164">
    <property type="entry name" value="Prefoldin_1"/>
    <property type="match status" value="1"/>
</dbReference>
<dbReference type="FunFam" id="1.10.287.370:FF:000040">
    <property type="entry name" value="PREFOLDIN 1"/>
    <property type="match status" value="1"/>
</dbReference>
<dbReference type="Gene3D" id="1.10.287.370">
    <property type="match status" value="1"/>
</dbReference>
<dbReference type="InterPro" id="IPR002777">
    <property type="entry name" value="PFD_beta-like"/>
</dbReference>
<dbReference type="InterPro" id="IPR009053">
    <property type="entry name" value="Prefoldin"/>
</dbReference>
<dbReference type="PANTHER" id="PTHR20903:SF0">
    <property type="entry name" value="PREFOLDIN SUBUNIT 1"/>
    <property type="match status" value="1"/>
</dbReference>
<dbReference type="PANTHER" id="PTHR20903">
    <property type="entry name" value="PREFOLDIN SUBUNIT 1-RELATED"/>
    <property type="match status" value="1"/>
</dbReference>
<dbReference type="Pfam" id="PF01920">
    <property type="entry name" value="Prefoldin_2"/>
    <property type="match status" value="1"/>
</dbReference>
<dbReference type="SUPFAM" id="SSF46579">
    <property type="entry name" value="Prefoldin"/>
    <property type="match status" value="1"/>
</dbReference>
<accession>Q94AF7</accession>
<accession>Q9ZQK7</accession>
<accession>Q9ZQK8</accession>
<reference key="1">
    <citation type="journal article" date="1999" name="Nature">
        <title>Sequence and analysis of chromosome 2 of the plant Arabidopsis thaliana.</title>
        <authorList>
            <person name="Lin X."/>
            <person name="Kaul S."/>
            <person name="Rounsley S.D."/>
            <person name="Shea T.P."/>
            <person name="Benito M.-I."/>
            <person name="Town C.D."/>
            <person name="Fujii C.Y."/>
            <person name="Mason T.M."/>
            <person name="Bowman C.L."/>
            <person name="Barnstead M.E."/>
            <person name="Feldblyum T.V."/>
            <person name="Buell C.R."/>
            <person name="Ketchum K.A."/>
            <person name="Lee J.J."/>
            <person name="Ronning C.M."/>
            <person name="Koo H.L."/>
            <person name="Moffat K.S."/>
            <person name="Cronin L.A."/>
            <person name="Shen M."/>
            <person name="Pai G."/>
            <person name="Van Aken S."/>
            <person name="Umayam L."/>
            <person name="Tallon L.J."/>
            <person name="Gill J.E."/>
            <person name="Adams M.D."/>
            <person name="Carrera A.J."/>
            <person name="Creasy T.H."/>
            <person name="Goodman H.M."/>
            <person name="Somerville C.R."/>
            <person name="Copenhaver G.P."/>
            <person name="Preuss D."/>
            <person name="Nierman W.C."/>
            <person name="White O."/>
            <person name="Eisen J.A."/>
            <person name="Salzberg S.L."/>
            <person name="Fraser C.M."/>
            <person name="Venter J.C."/>
        </authorList>
    </citation>
    <scope>NUCLEOTIDE SEQUENCE [LARGE SCALE GENOMIC DNA]</scope>
    <source>
        <strain>cv. Columbia</strain>
    </source>
</reference>
<reference key="2">
    <citation type="journal article" date="2017" name="Plant J.">
        <title>Araport11: a complete reannotation of the Arabidopsis thaliana reference genome.</title>
        <authorList>
            <person name="Cheng C.Y."/>
            <person name="Krishnakumar V."/>
            <person name="Chan A.P."/>
            <person name="Thibaud-Nissen F."/>
            <person name="Schobel S."/>
            <person name="Town C.D."/>
        </authorList>
    </citation>
    <scope>GENOME REANNOTATION</scope>
    <source>
        <strain>cv. Columbia</strain>
    </source>
</reference>
<reference key="3">
    <citation type="journal article" date="2003" name="Science">
        <title>Empirical analysis of transcriptional activity in the Arabidopsis genome.</title>
        <authorList>
            <person name="Yamada K."/>
            <person name="Lim J."/>
            <person name="Dale J.M."/>
            <person name="Chen H."/>
            <person name="Shinn P."/>
            <person name="Palm C.J."/>
            <person name="Southwick A.M."/>
            <person name="Wu H.C."/>
            <person name="Kim C.J."/>
            <person name="Nguyen M."/>
            <person name="Pham P.K."/>
            <person name="Cheuk R.F."/>
            <person name="Karlin-Newmann G."/>
            <person name="Liu S.X."/>
            <person name="Lam B."/>
            <person name="Sakano H."/>
            <person name="Wu T."/>
            <person name="Yu G."/>
            <person name="Miranda M."/>
            <person name="Quach H.L."/>
            <person name="Tripp M."/>
            <person name="Chang C.H."/>
            <person name="Lee J.M."/>
            <person name="Toriumi M.J."/>
            <person name="Chan M.M."/>
            <person name="Tang C.C."/>
            <person name="Onodera C.S."/>
            <person name="Deng J.M."/>
            <person name="Akiyama K."/>
            <person name="Ansari Y."/>
            <person name="Arakawa T."/>
            <person name="Banh J."/>
            <person name="Banno F."/>
            <person name="Bowser L."/>
            <person name="Brooks S.Y."/>
            <person name="Carninci P."/>
            <person name="Chao Q."/>
            <person name="Choy N."/>
            <person name="Enju A."/>
            <person name="Goldsmith A.D."/>
            <person name="Gurjal M."/>
            <person name="Hansen N.F."/>
            <person name="Hayashizaki Y."/>
            <person name="Johnson-Hopson C."/>
            <person name="Hsuan V.W."/>
            <person name="Iida K."/>
            <person name="Karnes M."/>
            <person name="Khan S."/>
            <person name="Koesema E."/>
            <person name="Ishida J."/>
            <person name="Jiang P.X."/>
            <person name="Jones T."/>
            <person name="Kawai J."/>
            <person name="Kamiya A."/>
            <person name="Meyers C."/>
            <person name="Nakajima M."/>
            <person name="Narusaka M."/>
            <person name="Seki M."/>
            <person name="Sakurai T."/>
            <person name="Satou M."/>
            <person name="Tamse R."/>
            <person name="Vaysberg M."/>
            <person name="Wallender E.K."/>
            <person name="Wong C."/>
            <person name="Yamamura Y."/>
            <person name="Yuan S."/>
            <person name="Shinozaki K."/>
            <person name="Davis R.W."/>
            <person name="Theologis A."/>
            <person name="Ecker J.R."/>
        </authorList>
    </citation>
    <scope>NUCLEOTIDE SEQUENCE [LARGE SCALE MRNA]</scope>
    <source>
        <strain>cv. Columbia</strain>
    </source>
</reference>
<reference key="4">
    <citation type="submission" date="2002-03" db="EMBL/GenBank/DDBJ databases">
        <title>Full-length cDNA from Arabidopsis thaliana.</title>
        <authorList>
            <person name="Brover V.V."/>
            <person name="Troukhan M.E."/>
            <person name="Alexandrov N.A."/>
            <person name="Lu Y.-P."/>
            <person name="Flavell R.B."/>
            <person name="Feldmann K.A."/>
        </authorList>
    </citation>
    <scope>NUCLEOTIDE SEQUENCE [LARGE SCALE MRNA]</scope>
</reference>
<reference key="5">
    <citation type="journal article" date="2009" name="Mol. Plant">
        <title>Prefoldins 3 and 5 play an essential role in Arabidopsis tolerance to salt stress.</title>
        <authorList>
            <person name="Rodriguez-Milla M.A."/>
            <person name="Salinas J."/>
        </authorList>
    </citation>
    <scope>FUNCTION</scope>
    <scope>GENE FAMILY</scope>
    <scope>NOMENCLATURE</scope>
</reference>
<reference key="6">
    <citation type="journal article" date="2013" name="Curr. Biol.">
        <title>Dynamic regulation of cortical microtubule organization through prefoldin-DELLA interaction.</title>
        <authorList>
            <person name="Locascio A."/>
            <person name="Blazquez M.A."/>
            <person name="Alabadi D."/>
        </authorList>
    </citation>
    <scope>SUBCELLULAR LOCATION</scope>
</reference>
<reference key="7">
    <citation type="journal article" date="2017" name="Mol. Plant">
        <title>Prefoldins negatively regulate cold acclimation in Arabidopsis thaliana by promoting nuclear proteasome-mediated HY5 degradation.</title>
        <authorList>
            <person name="Perea-Resa C."/>
            <person name="Rodriguez-Milla M.A."/>
            <person name="Iniesto E."/>
            <person name="Rubio V."/>
            <person name="Salinas J."/>
        </authorList>
    </citation>
    <scope>INDUCTION BY COLD</scope>
</reference>
<reference key="8">
    <citation type="journal article" date="2020" name="Nucleic Acids Res.">
        <title>Prefoldins contribute to maintaining the levels of the spliceosome LSM2-8 complex through Hsp90 in Arabidopsis.</title>
        <authorList>
            <person name="Esteve-Bruna D."/>
            <person name="Carrasco-Lopez C."/>
            <person name="Blanco-Tourinan N."/>
            <person name="Iserte J."/>
            <person name="Calleja-Cabrera J."/>
            <person name="Perea-Resa C."/>
            <person name="Urbez C."/>
            <person name="Carrasco P."/>
            <person name="Yanovsky M.J."/>
            <person name="Blazquez M.A."/>
            <person name="Salinas J."/>
            <person name="Alabadi D."/>
        </authorList>
    </citation>
    <scope>INTERACTION WITH LSM8</scope>
    <source>
        <strain>cv. Columbia</strain>
    </source>
</reference>
<comment type="function">
    <text evidence="2 3 5">Binds specifically to cytosolic chaperonin (c-CPN) and transfers target proteins to it (PubMed:19825635). Binds to nascent polypeptide chain and promotes folding in an environment in which there are many competing pathways for nonnative proteins (PubMed:19825635). Together with other chaperonins, contribute to the regulation of gene expression by modulating the spliceosome function on pre-mRNA splicing post-transcriptionally by acting as a co-chaperone of Hsp90 to control levels of LSM8 (By similarity). Required for microtubules (MTs) organization and dynamicity (By similarity). Involved in the process leading to microtubules dissociation in response to gibberellic acid (GA) probably due to the DELLA proteins-mediated translocation of the prefoldin co-chaperone complex from the cytoplasm to the nucleus (By similarity).</text>
</comment>
<comment type="subunit">
    <text evidence="1 7">Heterohexamer of two PFD-alpha type and four PFD-beta type subunits forming prefoldin co-chaperone complex (By similarity). Interacts with LSM8, a specific subunit of the LSM2-8 complex, which is a core component of the spliceosome (PubMed:32396196).</text>
</comment>
<comment type="subcellular location">
    <subcellularLocation>
        <location evidence="2">Cytoplasm</location>
    </subcellularLocation>
    <subcellularLocation>
        <location evidence="2">Nucleus</location>
    </subcellularLocation>
    <text evidence="2">In the presence of gibberellic acid (GA) and at room temperature, the prefoldin complex stays in the cytoplasm and is functional (By similarity). But in the absence of GA or in response to cold, the prefoldin complex is localized to the nucleus in the presence of DELLA proteins, which severely compromises alpha/beta-tubulin heterodimer availability, thus affecting microtubules (MTs) organization (By similarity). This changing subcellular localization follows a daily rhythm coordinated oscillation (By similarity).</text>
</comment>
<comment type="induction">
    <text evidence="6">Accumulates in response to cold.</text>
</comment>
<comment type="similarity">
    <text evidence="9">Belongs to the prefoldin subunit beta family.</text>
</comment>
<comment type="sequence caution" evidence="9">
    <conflict type="erroneous gene model prediction">
        <sequence resource="EMBL-CDS" id="AAD15526"/>
    </conflict>
</comment>
<comment type="sequence caution" evidence="9">
    <conflict type="erroneous gene model prediction">
        <sequence resource="EMBL-CDS" id="AAD15527"/>
    </conflict>
</comment>